<evidence type="ECO:0000305" key="1"/>
<protein>
    <recommendedName>
        <fullName>Putative uncharacterized protein RC0839</fullName>
    </recommendedName>
</protein>
<reference key="1">
    <citation type="journal article" date="2001" name="Science">
        <title>Mechanisms of evolution in Rickettsia conorii and R. prowazekii.</title>
        <authorList>
            <person name="Ogata H."/>
            <person name="Audic S."/>
            <person name="Renesto-Audiffren P."/>
            <person name="Fournier P.-E."/>
            <person name="Barbe V."/>
            <person name="Samson D."/>
            <person name="Roux V."/>
            <person name="Cossart P."/>
            <person name="Weissenbach J."/>
            <person name="Claverie J.-M."/>
            <person name="Raoult D."/>
        </authorList>
    </citation>
    <scope>NUCLEOTIDE SEQUENCE [LARGE SCALE GENOMIC DNA]</scope>
    <source>
        <strain>ATCC VR-613 / Malish 7</strain>
    </source>
</reference>
<feature type="chain" id="PRO_0000284427" description="Putative uncharacterized protein RC0839">
    <location>
        <begin position="1"/>
        <end position="70"/>
    </location>
</feature>
<gene>
    <name type="ordered locus">RC0839</name>
</gene>
<comment type="caution">
    <text evidence="1">Could be the product of a pseudogene. It corresponds to positions 370 to 439 of the complete orthologous and probably active protein in R.felis (RF_0890).</text>
</comment>
<sequence length="70" mass="8224">MKLGYSWKYGPFELLTIAAKNGWNSVIKNADLMHIPLPQYLANKEYQKIDKQKFNSHKDILQESQISIRE</sequence>
<organism>
    <name type="scientific">Rickettsia conorii (strain ATCC VR-613 / Malish 7)</name>
    <dbReference type="NCBI Taxonomy" id="272944"/>
    <lineage>
        <taxon>Bacteria</taxon>
        <taxon>Pseudomonadati</taxon>
        <taxon>Pseudomonadota</taxon>
        <taxon>Alphaproteobacteria</taxon>
        <taxon>Rickettsiales</taxon>
        <taxon>Rickettsiaceae</taxon>
        <taxon>Rickettsieae</taxon>
        <taxon>Rickettsia</taxon>
        <taxon>spotted fever group</taxon>
    </lineage>
</organism>
<accession>Q92HD2</accession>
<proteinExistence type="uncertain"/>
<dbReference type="EMBL" id="AE006914">
    <property type="protein sequence ID" value="AAL03377.1"/>
    <property type="molecule type" value="Genomic_DNA"/>
</dbReference>
<dbReference type="PIR" id="G97804">
    <property type="entry name" value="G97804"/>
</dbReference>
<dbReference type="RefSeq" id="WP_010977446.1">
    <property type="nucleotide sequence ID" value="NC_003103.1"/>
</dbReference>
<dbReference type="GeneID" id="927802"/>
<dbReference type="KEGG" id="rco:RC0839"/>
<dbReference type="PATRIC" id="fig|272944.4.peg.956"/>
<dbReference type="HOGENOM" id="CLU_2755283_0_0_5"/>
<dbReference type="Proteomes" id="UP000000816">
    <property type="component" value="Chromosome"/>
</dbReference>
<name>Y839_RICCN</name>